<name>MASZ_GEOSW</name>
<accession>C5D2K6</accession>
<protein>
    <recommendedName>
        <fullName evidence="1">Malate synthase G</fullName>
        <ecNumber evidence="1">2.3.3.9</ecNumber>
    </recommendedName>
</protein>
<organism>
    <name type="scientific">Geobacillus sp. (strain WCH70)</name>
    <dbReference type="NCBI Taxonomy" id="471223"/>
    <lineage>
        <taxon>Bacteria</taxon>
        <taxon>Bacillati</taxon>
        <taxon>Bacillota</taxon>
        <taxon>Bacilli</taxon>
        <taxon>Bacillales</taxon>
        <taxon>Anoxybacillaceae</taxon>
        <taxon>Geobacillus</taxon>
    </lineage>
</organism>
<dbReference type="EC" id="2.3.3.9" evidence="1"/>
<dbReference type="EMBL" id="CP001638">
    <property type="protein sequence ID" value="ACS24648.1"/>
    <property type="molecule type" value="Genomic_DNA"/>
</dbReference>
<dbReference type="SMR" id="C5D2K6"/>
<dbReference type="STRING" id="471223.GWCH70_1913"/>
<dbReference type="KEGG" id="gwc:GWCH70_1913"/>
<dbReference type="eggNOG" id="COG2225">
    <property type="taxonomic scope" value="Bacteria"/>
</dbReference>
<dbReference type="HOGENOM" id="CLU_028446_1_0_9"/>
<dbReference type="OrthoDB" id="9762054at2"/>
<dbReference type="UniPathway" id="UPA00703">
    <property type="reaction ID" value="UER00720"/>
</dbReference>
<dbReference type="GO" id="GO:0005829">
    <property type="term" value="C:cytosol"/>
    <property type="evidence" value="ECO:0007669"/>
    <property type="project" value="TreeGrafter"/>
</dbReference>
<dbReference type="GO" id="GO:0000287">
    <property type="term" value="F:magnesium ion binding"/>
    <property type="evidence" value="ECO:0007669"/>
    <property type="project" value="TreeGrafter"/>
</dbReference>
<dbReference type="GO" id="GO:0004474">
    <property type="term" value="F:malate synthase activity"/>
    <property type="evidence" value="ECO:0007669"/>
    <property type="project" value="UniProtKB-UniRule"/>
</dbReference>
<dbReference type="GO" id="GO:0009436">
    <property type="term" value="P:glyoxylate catabolic process"/>
    <property type="evidence" value="ECO:0007669"/>
    <property type="project" value="TreeGrafter"/>
</dbReference>
<dbReference type="GO" id="GO:0006097">
    <property type="term" value="P:glyoxylate cycle"/>
    <property type="evidence" value="ECO:0007669"/>
    <property type="project" value="UniProtKB-UniRule"/>
</dbReference>
<dbReference type="GO" id="GO:0006099">
    <property type="term" value="P:tricarboxylic acid cycle"/>
    <property type="evidence" value="ECO:0007669"/>
    <property type="project" value="UniProtKB-KW"/>
</dbReference>
<dbReference type="CDD" id="cd00728">
    <property type="entry name" value="malate_synt_G"/>
    <property type="match status" value="1"/>
</dbReference>
<dbReference type="FunFam" id="3.20.20.360:FF:000002">
    <property type="entry name" value="Malate synthase G"/>
    <property type="match status" value="1"/>
</dbReference>
<dbReference type="Gene3D" id="3.20.20.360">
    <property type="entry name" value="Malate synthase, domain 3"/>
    <property type="match status" value="2"/>
</dbReference>
<dbReference type="Gene3D" id="1.20.1220.12">
    <property type="entry name" value="Malate synthase, domain III"/>
    <property type="match status" value="1"/>
</dbReference>
<dbReference type="HAMAP" id="MF_00641">
    <property type="entry name" value="Malate_synth_G"/>
    <property type="match status" value="1"/>
</dbReference>
<dbReference type="InterPro" id="IPR044856">
    <property type="entry name" value="Malate_synth_C_sf"/>
</dbReference>
<dbReference type="InterPro" id="IPR011076">
    <property type="entry name" value="Malate_synth_sf"/>
</dbReference>
<dbReference type="InterPro" id="IPR001465">
    <property type="entry name" value="Malate_synthase_TIM"/>
</dbReference>
<dbReference type="InterPro" id="IPR006253">
    <property type="entry name" value="Malate_synthG"/>
</dbReference>
<dbReference type="InterPro" id="IPR048355">
    <property type="entry name" value="MS_C"/>
</dbReference>
<dbReference type="InterPro" id="IPR048356">
    <property type="entry name" value="MS_N"/>
</dbReference>
<dbReference type="InterPro" id="IPR046363">
    <property type="entry name" value="MS_N_TIM-barrel_dom"/>
</dbReference>
<dbReference type="InterPro" id="IPR048357">
    <property type="entry name" value="MSG_insertion"/>
</dbReference>
<dbReference type="NCBIfam" id="TIGR01345">
    <property type="entry name" value="malate_syn_G"/>
    <property type="match status" value="1"/>
</dbReference>
<dbReference type="NCBIfam" id="NF002825">
    <property type="entry name" value="PRK02999.1"/>
    <property type="match status" value="1"/>
</dbReference>
<dbReference type="PANTHER" id="PTHR42739">
    <property type="entry name" value="MALATE SYNTHASE G"/>
    <property type="match status" value="1"/>
</dbReference>
<dbReference type="PANTHER" id="PTHR42739:SF1">
    <property type="entry name" value="MALATE SYNTHASE G"/>
    <property type="match status" value="1"/>
</dbReference>
<dbReference type="Pfam" id="PF20659">
    <property type="entry name" value="MS_C"/>
    <property type="match status" value="1"/>
</dbReference>
<dbReference type="Pfam" id="PF20656">
    <property type="entry name" value="MS_N"/>
    <property type="match status" value="1"/>
</dbReference>
<dbReference type="Pfam" id="PF01274">
    <property type="entry name" value="MS_TIM-barrel"/>
    <property type="match status" value="1"/>
</dbReference>
<dbReference type="Pfam" id="PF20658">
    <property type="entry name" value="MSG_insertion"/>
    <property type="match status" value="1"/>
</dbReference>
<dbReference type="SUPFAM" id="SSF51645">
    <property type="entry name" value="Malate synthase G"/>
    <property type="match status" value="1"/>
</dbReference>
<feature type="chain" id="PRO_1000212376" description="Malate synthase G">
    <location>
        <begin position="1"/>
        <end position="727"/>
    </location>
</feature>
<feature type="active site" description="Proton acceptor" evidence="1">
    <location>
        <position position="339"/>
    </location>
</feature>
<feature type="active site" description="Proton donor" evidence="1">
    <location>
        <position position="630"/>
    </location>
</feature>
<feature type="binding site" evidence="1">
    <location>
        <position position="117"/>
    </location>
    <ligand>
        <name>acetyl-CoA</name>
        <dbReference type="ChEBI" id="CHEBI:57288"/>
    </ligand>
</feature>
<feature type="binding site" evidence="1">
    <location>
        <begin position="124"/>
        <end position="125"/>
    </location>
    <ligand>
        <name>acetyl-CoA</name>
        <dbReference type="ChEBI" id="CHEBI:57288"/>
    </ligand>
</feature>
<feature type="binding site" evidence="1">
    <location>
        <position position="275"/>
    </location>
    <ligand>
        <name>acetyl-CoA</name>
        <dbReference type="ChEBI" id="CHEBI:57288"/>
    </ligand>
</feature>
<feature type="binding site" evidence="1">
    <location>
        <position position="312"/>
    </location>
    <ligand>
        <name>acetyl-CoA</name>
        <dbReference type="ChEBI" id="CHEBI:57288"/>
    </ligand>
</feature>
<feature type="binding site" evidence="1">
    <location>
        <position position="339"/>
    </location>
    <ligand>
        <name>glyoxylate</name>
        <dbReference type="ChEBI" id="CHEBI:36655"/>
    </ligand>
</feature>
<feature type="binding site" evidence="1">
    <location>
        <position position="431"/>
    </location>
    <ligand>
        <name>glyoxylate</name>
        <dbReference type="ChEBI" id="CHEBI:36655"/>
    </ligand>
</feature>
<feature type="binding site" evidence="1">
    <location>
        <position position="431"/>
    </location>
    <ligand>
        <name>Mg(2+)</name>
        <dbReference type="ChEBI" id="CHEBI:18420"/>
    </ligand>
</feature>
<feature type="binding site" evidence="1">
    <location>
        <begin position="456"/>
        <end position="459"/>
    </location>
    <ligand>
        <name>glyoxylate</name>
        <dbReference type="ChEBI" id="CHEBI:36655"/>
    </ligand>
</feature>
<feature type="binding site" evidence="1">
    <location>
        <position position="459"/>
    </location>
    <ligand>
        <name>Mg(2+)</name>
        <dbReference type="ChEBI" id="CHEBI:18420"/>
    </ligand>
</feature>
<feature type="binding site" evidence="1">
    <location>
        <position position="540"/>
    </location>
    <ligand>
        <name>acetyl-CoA</name>
        <dbReference type="ChEBI" id="CHEBI:57288"/>
    </ligand>
</feature>
<feature type="modified residue" description="Cysteine sulfenic acid (-SOH)" evidence="1">
    <location>
        <position position="616"/>
    </location>
</feature>
<keyword id="KW-0963">Cytoplasm</keyword>
<keyword id="KW-0329">Glyoxylate bypass</keyword>
<keyword id="KW-0460">Magnesium</keyword>
<keyword id="KW-0479">Metal-binding</keyword>
<keyword id="KW-0558">Oxidation</keyword>
<keyword id="KW-0808">Transferase</keyword>
<keyword id="KW-0816">Tricarboxylic acid cycle</keyword>
<reference key="1">
    <citation type="submission" date="2009-06" db="EMBL/GenBank/DDBJ databases">
        <title>Complete sequence of chromosome of Geopacillus sp. WCH70.</title>
        <authorList>
            <consortium name="US DOE Joint Genome Institute"/>
            <person name="Lucas S."/>
            <person name="Copeland A."/>
            <person name="Lapidus A."/>
            <person name="Glavina del Rio T."/>
            <person name="Dalin E."/>
            <person name="Tice H."/>
            <person name="Bruce D."/>
            <person name="Goodwin L."/>
            <person name="Pitluck S."/>
            <person name="Chertkov O."/>
            <person name="Brettin T."/>
            <person name="Detter J.C."/>
            <person name="Han C."/>
            <person name="Larimer F."/>
            <person name="Land M."/>
            <person name="Hauser L."/>
            <person name="Kyrpides N."/>
            <person name="Mikhailova N."/>
            <person name="Brumm P."/>
            <person name="Mead D.A."/>
            <person name="Richardson P."/>
        </authorList>
    </citation>
    <scope>NUCLEOTIDE SEQUENCE [LARGE SCALE GENOMIC DNA]</scope>
    <source>
        <strain>WCH70</strain>
    </source>
</reference>
<evidence type="ECO:0000255" key="1">
    <source>
        <dbReference type="HAMAP-Rule" id="MF_00641"/>
    </source>
</evidence>
<sequence>MGEYVKVGNLQVAKLFYEFMNDEVLPGSEVNKEKFWKDFETLIADLTPKNKALLARRDELQAKINEWHKEHRGNFDMEKYKAFLTDIGYLEPEVDDFEITTEGVDEEIAVQAGPQLVVPLTNARYALNAANARWGSLYDALYGTDAISEEDGAERGDSYNPVRGAKVIAYAREFLDQAVPLKEYSHKDAVQYAVVDGKLVVSVEGGSTTTLKEEEKFIGFQGNPENPTAILLKNNGLHIEIQIDRNHPVGKTDKAGVKDIYLEAAVTTIMDGEDSVAAVDAEDKVLVYRNLLGLVKGDLTSTFTKGGKTITRALNPDRVYRTADGKEITLPGRSLMFVRNVGHLMTNNTILDANGEEVYEGIMDAVVTSLIMKHSLLGNTRYLNSRKGSFYIVKPKMHGSEEVAFANELFDRVEDMLGLKRNTIKIGVMDEERRTTLNLKNCIYQVRDRIIFINTGFLDRTGDEIHTSMEAGPMIRKNDMKTSVWLQAYEKSNVTIGLAAGFQGRAQIGKGMWAMPDMMAEMLKQKGGQLKAGANTAWVPSPTAATLHALHYHQVNVAEVQNELRKERKDYRDEILQIPVAVNPQWTPEEIQEELDNNCQGILGYVVRWIDQGIGCSKVPDINNIGLMEDRATLRISSQHIANWLHHGICTKEQVLETLKRMAKVVDEQNAGDPNYRPMAPDYDNSVAFQAACDLIFKGYEQPNGYTEPILHRRRLEAKAKYAAVQQ</sequence>
<proteinExistence type="inferred from homology"/>
<comment type="function">
    <text evidence="1">Involved in the glycolate utilization. Catalyzes the condensation and subsequent hydrolysis of acetyl-coenzyme A (acetyl-CoA) and glyoxylate to form malate and CoA.</text>
</comment>
<comment type="catalytic activity">
    <reaction evidence="1">
        <text>glyoxylate + acetyl-CoA + H2O = (S)-malate + CoA + H(+)</text>
        <dbReference type="Rhea" id="RHEA:18181"/>
        <dbReference type="ChEBI" id="CHEBI:15377"/>
        <dbReference type="ChEBI" id="CHEBI:15378"/>
        <dbReference type="ChEBI" id="CHEBI:15589"/>
        <dbReference type="ChEBI" id="CHEBI:36655"/>
        <dbReference type="ChEBI" id="CHEBI:57287"/>
        <dbReference type="ChEBI" id="CHEBI:57288"/>
        <dbReference type="EC" id="2.3.3.9"/>
    </reaction>
</comment>
<comment type="cofactor">
    <cofactor evidence="1">
        <name>Mg(2+)</name>
        <dbReference type="ChEBI" id="CHEBI:18420"/>
    </cofactor>
</comment>
<comment type="pathway">
    <text evidence="1">Carbohydrate metabolism; glyoxylate cycle; (S)-malate from isocitrate: step 2/2.</text>
</comment>
<comment type="subunit">
    <text evidence="1">Monomer.</text>
</comment>
<comment type="subcellular location">
    <subcellularLocation>
        <location evidence="1">Cytoplasm</location>
    </subcellularLocation>
</comment>
<comment type="similarity">
    <text evidence="1">Belongs to the malate synthase family. GlcB subfamily.</text>
</comment>
<gene>
    <name evidence="1" type="primary">glcB</name>
    <name type="ordered locus">GWCH70_1913</name>
</gene>